<reference key="1">
    <citation type="journal article" date="1995" name="Mol. Biochem. Parasitol.">
        <title>Cloning of two actin genes from Schistosoma mansoni.</title>
        <authorList>
            <person name="Oliveira G.C."/>
            <person name="Kemp W.M."/>
        </authorList>
    </citation>
    <scope>NUCLEOTIDE SEQUENCE [MRNA]</scope>
    <source>
        <strain>LE</strain>
    </source>
</reference>
<evidence type="ECO:0000250" key="1">
    <source>
        <dbReference type="UniProtKB" id="P68137"/>
    </source>
</evidence>
<evidence type="ECO:0000305" key="2"/>
<name>ACT1_SCHMA</name>
<dbReference type="EC" id="3.6.4.-" evidence="1"/>
<dbReference type="EMBL" id="M80334">
    <property type="protein sequence ID" value="AAA62377.1"/>
    <property type="molecule type" value="mRNA"/>
</dbReference>
<dbReference type="RefSeq" id="XP_018653066.1">
    <property type="nucleotide sequence ID" value="XM_018798090.1"/>
</dbReference>
<dbReference type="SMR" id="P53470"/>
<dbReference type="STRING" id="6183.P53470"/>
<dbReference type="EnsemblMetazoa" id="Smp_306600.1">
    <property type="protein sequence ID" value="Smp_306600.1"/>
    <property type="gene ID" value="Smp_306600"/>
</dbReference>
<dbReference type="GeneID" id="8349762"/>
<dbReference type="KEGG" id="smm:Smp_046600"/>
<dbReference type="WBParaSite" id="Smp_306600.1">
    <property type="protein sequence ID" value="Smp_306600.1"/>
    <property type="gene ID" value="Smp_306600"/>
</dbReference>
<dbReference type="CTD" id="8349762"/>
<dbReference type="eggNOG" id="KOG0676">
    <property type="taxonomic scope" value="Eukaryota"/>
</dbReference>
<dbReference type="HOGENOM" id="CLU_027965_0_2_1"/>
<dbReference type="InParanoid" id="P53470"/>
<dbReference type="OMA" id="WISNEEY"/>
<dbReference type="OrthoDB" id="10249208at2759"/>
<dbReference type="PhylomeDB" id="P53470"/>
<dbReference type="Proteomes" id="UP000008854">
    <property type="component" value="Unassembled WGS sequence"/>
</dbReference>
<dbReference type="ExpressionAtlas" id="P53470">
    <property type="expression patterns" value="baseline and differential"/>
</dbReference>
<dbReference type="GO" id="GO:0005737">
    <property type="term" value="C:cytoplasm"/>
    <property type="evidence" value="ECO:0007669"/>
    <property type="project" value="UniProtKB-KW"/>
</dbReference>
<dbReference type="GO" id="GO:0005856">
    <property type="term" value="C:cytoskeleton"/>
    <property type="evidence" value="ECO:0007669"/>
    <property type="project" value="UniProtKB-SubCell"/>
</dbReference>
<dbReference type="GO" id="GO:0005524">
    <property type="term" value="F:ATP binding"/>
    <property type="evidence" value="ECO:0007669"/>
    <property type="project" value="UniProtKB-KW"/>
</dbReference>
<dbReference type="GO" id="GO:0016787">
    <property type="term" value="F:hydrolase activity"/>
    <property type="evidence" value="ECO:0007669"/>
    <property type="project" value="UniProtKB-KW"/>
</dbReference>
<dbReference type="CDD" id="cd10224">
    <property type="entry name" value="ASKHA_NBD_actin"/>
    <property type="match status" value="1"/>
</dbReference>
<dbReference type="FunFam" id="3.30.420.40:FF:000131">
    <property type="entry name" value="Actin, alpha skeletal muscle"/>
    <property type="match status" value="1"/>
</dbReference>
<dbReference type="FunFam" id="3.30.420.40:FF:000291">
    <property type="entry name" value="Actin, alpha skeletal muscle"/>
    <property type="match status" value="1"/>
</dbReference>
<dbReference type="FunFam" id="3.90.640.10:FF:000047">
    <property type="entry name" value="Actin, alpha skeletal muscle"/>
    <property type="match status" value="1"/>
</dbReference>
<dbReference type="FunFam" id="3.30.420.40:FF:000058">
    <property type="entry name" value="Putative actin-related protein 5"/>
    <property type="match status" value="1"/>
</dbReference>
<dbReference type="Gene3D" id="3.30.420.40">
    <property type="match status" value="2"/>
</dbReference>
<dbReference type="Gene3D" id="3.90.640.10">
    <property type="entry name" value="Actin, Chain A, domain 4"/>
    <property type="match status" value="1"/>
</dbReference>
<dbReference type="InterPro" id="IPR004000">
    <property type="entry name" value="Actin"/>
</dbReference>
<dbReference type="InterPro" id="IPR020902">
    <property type="entry name" value="Actin/actin-like_CS"/>
</dbReference>
<dbReference type="InterPro" id="IPR004001">
    <property type="entry name" value="Actin_CS"/>
</dbReference>
<dbReference type="InterPro" id="IPR043129">
    <property type="entry name" value="ATPase_NBD"/>
</dbReference>
<dbReference type="PANTHER" id="PTHR11937">
    <property type="entry name" value="ACTIN"/>
    <property type="match status" value="1"/>
</dbReference>
<dbReference type="Pfam" id="PF00022">
    <property type="entry name" value="Actin"/>
    <property type="match status" value="1"/>
</dbReference>
<dbReference type="PRINTS" id="PR00190">
    <property type="entry name" value="ACTIN"/>
</dbReference>
<dbReference type="SMART" id="SM00268">
    <property type="entry name" value="ACTIN"/>
    <property type="match status" value="1"/>
</dbReference>
<dbReference type="SUPFAM" id="SSF53067">
    <property type="entry name" value="Actin-like ATPase domain"/>
    <property type="match status" value="2"/>
</dbReference>
<dbReference type="PROSITE" id="PS00406">
    <property type="entry name" value="ACTINS_1"/>
    <property type="match status" value="1"/>
</dbReference>
<dbReference type="PROSITE" id="PS00432">
    <property type="entry name" value="ACTINS_2"/>
    <property type="match status" value="1"/>
</dbReference>
<dbReference type="PROSITE" id="PS01132">
    <property type="entry name" value="ACTINS_ACT_LIKE"/>
    <property type="match status" value="1"/>
</dbReference>
<organism>
    <name type="scientific">Schistosoma mansoni</name>
    <name type="common">Blood fluke</name>
    <dbReference type="NCBI Taxonomy" id="6183"/>
    <lineage>
        <taxon>Eukaryota</taxon>
        <taxon>Metazoa</taxon>
        <taxon>Spiralia</taxon>
        <taxon>Lophotrochozoa</taxon>
        <taxon>Platyhelminthes</taxon>
        <taxon>Trematoda</taxon>
        <taxon>Digenea</taxon>
        <taxon>Strigeidida</taxon>
        <taxon>Schistosomatoidea</taxon>
        <taxon>Schistosomatidae</taxon>
        <taxon>Schistosoma</taxon>
    </lineage>
</organism>
<sequence length="376" mass="41732">MAEEDVAALVIDNGSGMCKAGFAGDDAPRAVFPSIVGRPRHQGVMVGMGQKDSYVGDEAQSKRGILTLKYPIEHGIVTNWDDMEKIWHHTFYNELRVAPEEHPVLLTEAPLNPKANREKMTQIMFETFNVPAMYVAIQAVLSLYASGRTTGIVLDSGDGVTHTVPIYEGYALPHAILRLDLAGRDLTDYMMKILTERGYSFTTTAEREIVRDIKEKLCYVALDFEQEMGTAASSSALEKSYELPDGQVITIGNERFRCPEALFQPSFLGMEASGIHETTYNSIMKCDVDIRKDLYSNTVLSGGSTMYPGIADRMQKEISALAPSTMKIKIVAPPERKYSVWIGGSILASLSTFQQMWISKQEYDESGPGIVHRKCF</sequence>
<keyword id="KW-0067">ATP-binding</keyword>
<keyword id="KW-0963">Cytoplasm</keyword>
<keyword id="KW-0206">Cytoskeleton</keyword>
<keyword id="KW-0378">Hydrolase</keyword>
<keyword id="KW-0547">Nucleotide-binding</keyword>
<keyword id="KW-1185">Reference proteome</keyword>
<accession>P53470</accession>
<proteinExistence type="evidence at transcript level"/>
<protein>
    <recommendedName>
        <fullName>Actin-1</fullName>
        <ecNumber evidence="1">3.6.4.-</ecNumber>
    </recommendedName>
</protein>
<feature type="chain" id="PRO_0000089005" description="Actin-1">
    <location>
        <begin position="1"/>
        <end position="376"/>
    </location>
</feature>
<comment type="function">
    <text>Actins are highly conserved proteins that are involved in various types of cell motility and are ubiquitously expressed in all eukaryotic cells.</text>
</comment>
<comment type="catalytic activity">
    <reaction evidence="1">
        <text>ATP + H2O = ADP + phosphate + H(+)</text>
        <dbReference type="Rhea" id="RHEA:13065"/>
        <dbReference type="ChEBI" id="CHEBI:15377"/>
        <dbReference type="ChEBI" id="CHEBI:15378"/>
        <dbReference type="ChEBI" id="CHEBI:30616"/>
        <dbReference type="ChEBI" id="CHEBI:43474"/>
        <dbReference type="ChEBI" id="CHEBI:456216"/>
    </reaction>
</comment>
<comment type="subcellular location">
    <subcellularLocation>
        <location>Cytoplasm</location>
        <location>Cytoskeleton</location>
    </subcellularLocation>
</comment>
<comment type="similarity">
    <text evidence="2">Belongs to the actin family.</text>
</comment>